<proteinExistence type="inferred from homology"/>
<sequence>MALNPLEQFKVYTVIELPRLFGYDVSFTNSSLFMMISVILVILFLLFGIKKGAVIPGYLQAAVEYVYDFVISIIENNTGSKGLQHIPLIFTVFIFILSCNLVGVLPYSFTVTSHVIVTFALSMVVFIYITIVGFKERGVEFLRILLPKGTPSWLAPIIIIIKLFAYLVRPVSLSIRLAANMIAGHTIIKVIAGFIVNMNIFFTPAPFLFIIALIGFEVFVAILQAYIFTILTCVYLSDAVK</sequence>
<accession>C0R5U3</accession>
<gene>
    <name evidence="1" type="primary">atpB</name>
    <name type="ordered locus">WRi_003170</name>
</gene>
<dbReference type="EMBL" id="CP001391">
    <property type="protein sequence ID" value="ACN95135.1"/>
    <property type="molecule type" value="Genomic_DNA"/>
</dbReference>
<dbReference type="RefSeq" id="WP_006280272.1">
    <property type="nucleotide sequence ID" value="NZ_MKIF01000161.1"/>
</dbReference>
<dbReference type="SMR" id="C0R5U3"/>
<dbReference type="STRING" id="66084.WRi_003170"/>
<dbReference type="KEGG" id="wri:WRi_003170"/>
<dbReference type="HOGENOM" id="CLU_041018_0_2_5"/>
<dbReference type="Proteomes" id="UP000001293">
    <property type="component" value="Chromosome"/>
</dbReference>
<dbReference type="GO" id="GO:0005886">
    <property type="term" value="C:plasma membrane"/>
    <property type="evidence" value="ECO:0007669"/>
    <property type="project" value="UniProtKB-SubCell"/>
</dbReference>
<dbReference type="GO" id="GO:0045259">
    <property type="term" value="C:proton-transporting ATP synthase complex"/>
    <property type="evidence" value="ECO:0007669"/>
    <property type="project" value="UniProtKB-KW"/>
</dbReference>
<dbReference type="GO" id="GO:0046933">
    <property type="term" value="F:proton-transporting ATP synthase activity, rotational mechanism"/>
    <property type="evidence" value="ECO:0007669"/>
    <property type="project" value="UniProtKB-UniRule"/>
</dbReference>
<dbReference type="CDD" id="cd00310">
    <property type="entry name" value="ATP-synt_Fo_a_6"/>
    <property type="match status" value="1"/>
</dbReference>
<dbReference type="Gene3D" id="1.20.120.220">
    <property type="entry name" value="ATP synthase, F0 complex, subunit A"/>
    <property type="match status" value="1"/>
</dbReference>
<dbReference type="HAMAP" id="MF_01393">
    <property type="entry name" value="ATP_synth_a_bact"/>
    <property type="match status" value="1"/>
</dbReference>
<dbReference type="InterPro" id="IPR000568">
    <property type="entry name" value="ATP_synth_F0_asu"/>
</dbReference>
<dbReference type="InterPro" id="IPR023011">
    <property type="entry name" value="ATP_synth_F0_asu_AS"/>
</dbReference>
<dbReference type="InterPro" id="IPR045083">
    <property type="entry name" value="ATP_synth_F0_asu_bact/mt"/>
</dbReference>
<dbReference type="InterPro" id="IPR035908">
    <property type="entry name" value="F0_ATP_A_sf"/>
</dbReference>
<dbReference type="NCBIfam" id="TIGR01131">
    <property type="entry name" value="ATP_synt_6_or_A"/>
    <property type="match status" value="1"/>
</dbReference>
<dbReference type="NCBIfam" id="NF004482">
    <property type="entry name" value="PRK05815.2-4"/>
    <property type="match status" value="1"/>
</dbReference>
<dbReference type="PANTHER" id="PTHR11410">
    <property type="entry name" value="ATP SYNTHASE SUBUNIT A"/>
    <property type="match status" value="1"/>
</dbReference>
<dbReference type="PANTHER" id="PTHR11410:SF0">
    <property type="entry name" value="ATP SYNTHASE SUBUNIT A"/>
    <property type="match status" value="1"/>
</dbReference>
<dbReference type="Pfam" id="PF00119">
    <property type="entry name" value="ATP-synt_A"/>
    <property type="match status" value="1"/>
</dbReference>
<dbReference type="PRINTS" id="PR00123">
    <property type="entry name" value="ATPASEA"/>
</dbReference>
<dbReference type="SUPFAM" id="SSF81336">
    <property type="entry name" value="F1F0 ATP synthase subunit A"/>
    <property type="match status" value="1"/>
</dbReference>
<dbReference type="PROSITE" id="PS00449">
    <property type="entry name" value="ATPASE_A"/>
    <property type="match status" value="1"/>
</dbReference>
<name>ATP6_WOLWR</name>
<reference key="1">
    <citation type="journal article" date="2009" name="Proc. Natl. Acad. Sci. U.S.A.">
        <title>The mosaic genome structure of the Wolbachia wRi strain infecting Drosophila simulans.</title>
        <authorList>
            <person name="Klasson L."/>
            <person name="Westberg J."/>
            <person name="Sapountzis P."/>
            <person name="Naeslund K."/>
            <person name="Lutnaes Y."/>
            <person name="Darby A.C."/>
            <person name="Veneti Z."/>
            <person name="Chen L."/>
            <person name="Braig H.R."/>
            <person name="Garrett R."/>
            <person name="Bourtzis K."/>
            <person name="Andersson S.G."/>
        </authorList>
    </citation>
    <scope>NUCLEOTIDE SEQUENCE [LARGE SCALE GENOMIC DNA]</scope>
    <source>
        <strain>wRi</strain>
    </source>
</reference>
<keyword id="KW-0066">ATP synthesis</keyword>
<keyword id="KW-0997">Cell inner membrane</keyword>
<keyword id="KW-1003">Cell membrane</keyword>
<keyword id="KW-0138">CF(0)</keyword>
<keyword id="KW-0375">Hydrogen ion transport</keyword>
<keyword id="KW-0406">Ion transport</keyword>
<keyword id="KW-0472">Membrane</keyword>
<keyword id="KW-0812">Transmembrane</keyword>
<keyword id="KW-1133">Transmembrane helix</keyword>
<keyword id="KW-0813">Transport</keyword>
<organism>
    <name type="scientific">Wolbachia sp. subsp. Drosophila simulans (strain wRi)</name>
    <dbReference type="NCBI Taxonomy" id="66084"/>
    <lineage>
        <taxon>Bacteria</taxon>
        <taxon>Pseudomonadati</taxon>
        <taxon>Pseudomonadota</taxon>
        <taxon>Alphaproteobacteria</taxon>
        <taxon>Rickettsiales</taxon>
        <taxon>Anaplasmataceae</taxon>
        <taxon>Wolbachieae</taxon>
        <taxon>Wolbachia</taxon>
    </lineage>
</organism>
<evidence type="ECO:0000255" key="1">
    <source>
        <dbReference type="HAMAP-Rule" id="MF_01393"/>
    </source>
</evidence>
<comment type="function">
    <text evidence="1">Key component of the proton channel; it plays a direct role in the translocation of protons across the membrane.</text>
</comment>
<comment type="subunit">
    <text evidence="1">F-type ATPases have 2 components, CF(1) - the catalytic core - and CF(0) - the membrane proton channel. CF(1) has five subunits: alpha(3), beta(3), gamma(1), delta(1), epsilon(1). CF(0) has three main subunits: a(1), b(2) and c(9-12). The alpha and beta chains form an alternating ring which encloses part of the gamma chain. CF(1) is attached to CF(0) by a central stalk formed by the gamma and epsilon chains, while a peripheral stalk is formed by the delta and b chains.</text>
</comment>
<comment type="subcellular location">
    <subcellularLocation>
        <location evidence="1">Cell inner membrane</location>
        <topology evidence="1">Multi-pass membrane protein</topology>
    </subcellularLocation>
</comment>
<comment type="similarity">
    <text evidence="1">Belongs to the ATPase A chain family.</text>
</comment>
<feature type="chain" id="PRO_1000184298" description="ATP synthase subunit a">
    <location>
        <begin position="1"/>
        <end position="241"/>
    </location>
</feature>
<feature type="transmembrane region" description="Helical" evidence="1">
    <location>
        <begin position="29"/>
        <end position="49"/>
    </location>
</feature>
<feature type="transmembrane region" description="Helical" evidence="1">
    <location>
        <begin position="54"/>
        <end position="74"/>
    </location>
</feature>
<feature type="transmembrane region" description="Helical" evidence="1">
    <location>
        <begin position="86"/>
        <end position="106"/>
    </location>
</feature>
<feature type="transmembrane region" description="Helical" evidence="1">
    <location>
        <begin position="114"/>
        <end position="134"/>
    </location>
</feature>
<feature type="transmembrane region" description="Helical" evidence="1">
    <location>
        <begin position="153"/>
        <end position="173"/>
    </location>
</feature>
<feature type="transmembrane region" description="Helical" evidence="1">
    <location>
        <begin position="177"/>
        <end position="197"/>
    </location>
</feature>
<feature type="transmembrane region" description="Helical" evidence="1">
    <location>
        <begin position="200"/>
        <end position="220"/>
    </location>
</feature>
<feature type="transmembrane region" description="Helical" evidence="1">
    <location>
        <begin position="221"/>
        <end position="241"/>
    </location>
</feature>
<protein>
    <recommendedName>
        <fullName evidence="1">ATP synthase subunit a</fullName>
    </recommendedName>
    <alternativeName>
        <fullName evidence="1">ATP synthase F0 sector subunit a</fullName>
    </alternativeName>
    <alternativeName>
        <fullName evidence="1">F-ATPase subunit 6</fullName>
    </alternativeName>
</protein>